<name>MOBA_PSEAE</name>
<reference key="1">
    <citation type="submission" date="1998-03" db="EMBL/GenBank/DDBJ databases">
        <title>Identification of a cytochrome c precursor gene in Pseudomonas aeruginosa.</title>
        <authorList>
            <person name="Kerschen J."/>
            <person name="Hassett D.J."/>
            <person name="Rowe J.J."/>
        </authorList>
    </citation>
    <scope>NUCLEOTIDE SEQUENCE [GENOMIC DNA]</scope>
    <source>
        <strain>ATCC 15692 / DSM 22644 / CIP 104116 / JCM 14847 / LMG 12228 / 1C / PRS 101 / PAO1</strain>
    </source>
</reference>
<reference key="2">
    <citation type="journal article" date="2000" name="Nature">
        <title>Complete genome sequence of Pseudomonas aeruginosa PAO1, an opportunistic pathogen.</title>
        <authorList>
            <person name="Stover C.K."/>
            <person name="Pham X.-Q.T."/>
            <person name="Erwin A.L."/>
            <person name="Mizoguchi S.D."/>
            <person name="Warrener P."/>
            <person name="Hickey M.J."/>
            <person name="Brinkman F.S.L."/>
            <person name="Hufnagle W.O."/>
            <person name="Kowalik D.J."/>
            <person name="Lagrou M."/>
            <person name="Garber R.L."/>
            <person name="Goltry L."/>
            <person name="Tolentino E."/>
            <person name="Westbrock-Wadman S."/>
            <person name="Yuan Y."/>
            <person name="Brody L.L."/>
            <person name="Coulter S.N."/>
            <person name="Folger K.R."/>
            <person name="Kas A."/>
            <person name="Larbig K."/>
            <person name="Lim R.M."/>
            <person name="Smith K.A."/>
            <person name="Spencer D.H."/>
            <person name="Wong G.K.-S."/>
            <person name="Wu Z."/>
            <person name="Paulsen I.T."/>
            <person name="Reizer J."/>
            <person name="Saier M.H. Jr."/>
            <person name="Hancock R.E.W."/>
            <person name="Lory S."/>
            <person name="Olson M.V."/>
        </authorList>
    </citation>
    <scope>NUCLEOTIDE SEQUENCE [LARGE SCALE GENOMIC DNA]</scope>
    <source>
        <strain>ATCC 15692 / DSM 22644 / CIP 104116 / JCM 14847 / LMG 12228 / 1C / PRS 101 / PAO1</strain>
    </source>
</reference>
<comment type="function">
    <text evidence="1">Transfers a GMP moiety from GTP to Mo-molybdopterin (Mo-MPT) cofactor (Moco or molybdenum cofactor) to form Mo-molybdopterin guanine dinucleotide (Mo-MGD) cofactor.</text>
</comment>
<comment type="catalytic activity">
    <reaction evidence="1">
        <text>Mo-molybdopterin + GTP + H(+) = Mo-molybdopterin guanine dinucleotide + diphosphate</text>
        <dbReference type="Rhea" id="RHEA:34243"/>
        <dbReference type="ChEBI" id="CHEBI:15378"/>
        <dbReference type="ChEBI" id="CHEBI:33019"/>
        <dbReference type="ChEBI" id="CHEBI:37565"/>
        <dbReference type="ChEBI" id="CHEBI:71302"/>
        <dbReference type="ChEBI" id="CHEBI:71310"/>
        <dbReference type="EC" id="2.7.7.77"/>
    </reaction>
</comment>
<comment type="cofactor">
    <cofactor evidence="1">
        <name>Mg(2+)</name>
        <dbReference type="ChEBI" id="CHEBI:18420"/>
    </cofactor>
</comment>
<comment type="subunit">
    <text evidence="1">Monomer.</text>
</comment>
<comment type="subcellular location">
    <subcellularLocation>
        <location evidence="1">Cytoplasm</location>
    </subcellularLocation>
</comment>
<comment type="domain">
    <text evidence="1">The N-terminal domain determines nucleotide recognition and specific binding, while the C-terminal domain determines the specific binding to the target protein.</text>
</comment>
<comment type="similarity">
    <text evidence="1">Belongs to the MobA family.</text>
</comment>
<dbReference type="EC" id="2.7.7.77" evidence="1"/>
<dbReference type="EMBL" id="AF053982">
    <property type="protein sequence ID" value="AAC15714.1"/>
    <property type="molecule type" value="Genomic_DNA"/>
</dbReference>
<dbReference type="EMBL" id="AE004091">
    <property type="protein sequence ID" value="AAG06418.1"/>
    <property type="molecule type" value="Genomic_DNA"/>
</dbReference>
<dbReference type="PIR" id="E83266">
    <property type="entry name" value="E83266"/>
</dbReference>
<dbReference type="RefSeq" id="NP_251720.1">
    <property type="nucleotide sequence ID" value="NC_002516.2"/>
</dbReference>
<dbReference type="RefSeq" id="WP_003113968.1">
    <property type="nucleotide sequence ID" value="NZ_QZGE01000009.1"/>
</dbReference>
<dbReference type="SMR" id="O68799"/>
<dbReference type="FunCoup" id="O68799">
    <property type="interactions" value="97"/>
</dbReference>
<dbReference type="STRING" id="208964.PA3030"/>
<dbReference type="PaxDb" id="208964-PA3030"/>
<dbReference type="GeneID" id="882980"/>
<dbReference type="KEGG" id="pae:PA3030"/>
<dbReference type="PATRIC" id="fig|208964.12.peg.3179"/>
<dbReference type="PseudoCAP" id="PA3030"/>
<dbReference type="HOGENOM" id="CLU_055597_5_1_6"/>
<dbReference type="InParanoid" id="O68799"/>
<dbReference type="OrthoDB" id="9788394at2"/>
<dbReference type="PhylomeDB" id="O68799"/>
<dbReference type="BioCyc" id="PAER208964:G1FZ6-3082-MONOMER"/>
<dbReference type="Proteomes" id="UP000002438">
    <property type="component" value="Chromosome"/>
</dbReference>
<dbReference type="GO" id="GO:0005737">
    <property type="term" value="C:cytoplasm"/>
    <property type="evidence" value="ECO:0007669"/>
    <property type="project" value="UniProtKB-SubCell"/>
</dbReference>
<dbReference type="GO" id="GO:0005525">
    <property type="term" value="F:GTP binding"/>
    <property type="evidence" value="ECO:0007669"/>
    <property type="project" value="UniProtKB-UniRule"/>
</dbReference>
<dbReference type="GO" id="GO:0046872">
    <property type="term" value="F:metal ion binding"/>
    <property type="evidence" value="ECO:0007669"/>
    <property type="project" value="UniProtKB-KW"/>
</dbReference>
<dbReference type="GO" id="GO:0061603">
    <property type="term" value="F:molybdenum cofactor guanylyltransferase activity"/>
    <property type="evidence" value="ECO:0007669"/>
    <property type="project" value="UniProtKB-EC"/>
</dbReference>
<dbReference type="GO" id="GO:0016779">
    <property type="term" value="F:nucleotidyltransferase activity"/>
    <property type="evidence" value="ECO:0000318"/>
    <property type="project" value="GO_Central"/>
</dbReference>
<dbReference type="GO" id="GO:1902758">
    <property type="term" value="P:bis(molybdopterin guanine dinucleotide)molybdenum biosynthetic process"/>
    <property type="evidence" value="ECO:0000318"/>
    <property type="project" value="GO_Central"/>
</dbReference>
<dbReference type="CDD" id="cd02503">
    <property type="entry name" value="MobA"/>
    <property type="match status" value="1"/>
</dbReference>
<dbReference type="Gene3D" id="3.90.550.10">
    <property type="entry name" value="Spore Coat Polysaccharide Biosynthesis Protein SpsA, Chain A"/>
    <property type="match status" value="1"/>
</dbReference>
<dbReference type="HAMAP" id="MF_00316">
    <property type="entry name" value="MobA"/>
    <property type="match status" value="1"/>
</dbReference>
<dbReference type="InterPro" id="IPR025877">
    <property type="entry name" value="MobA-like_NTP_Trfase"/>
</dbReference>
<dbReference type="InterPro" id="IPR013482">
    <property type="entry name" value="Molybde_CF_guanTrfase"/>
</dbReference>
<dbReference type="InterPro" id="IPR029044">
    <property type="entry name" value="Nucleotide-diphossugar_trans"/>
</dbReference>
<dbReference type="NCBIfam" id="TIGR02665">
    <property type="entry name" value="molyb_mobA"/>
    <property type="match status" value="1"/>
</dbReference>
<dbReference type="PANTHER" id="PTHR19136">
    <property type="entry name" value="MOLYBDENUM COFACTOR GUANYLYLTRANSFERASE"/>
    <property type="match status" value="1"/>
</dbReference>
<dbReference type="PANTHER" id="PTHR19136:SF81">
    <property type="entry name" value="MOLYBDENUM COFACTOR GUANYLYLTRANSFERASE"/>
    <property type="match status" value="1"/>
</dbReference>
<dbReference type="Pfam" id="PF12804">
    <property type="entry name" value="NTP_transf_3"/>
    <property type="match status" value="1"/>
</dbReference>
<dbReference type="SUPFAM" id="SSF53448">
    <property type="entry name" value="Nucleotide-diphospho-sugar transferases"/>
    <property type="match status" value="1"/>
</dbReference>
<protein>
    <recommendedName>
        <fullName evidence="1">Molybdenum cofactor guanylyltransferase</fullName>
        <shortName evidence="1">MoCo guanylyltransferase</shortName>
        <ecNumber evidence="1">2.7.7.77</ecNumber>
    </recommendedName>
    <alternativeName>
        <fullName evidence="1">GTP:molybdopterin guanylyltransferase</fullName>
    </alternativeName>
    <alternativeName>
        <fullName evidence="1">Mo-MPT guanylyltransferase</fullName>
    </alternativeName>
    <alternativeName>
        <fullName evidence="1">Molybdopterin guanylyltransferase</fullName>
    </alternativeName>
    <alternativeName>
        <fullName evidence="1">Molybdopterin-guanine dinucleotide synthase</fullName>
        <shortName evidence="1">MGD synthase</shortName>
    </alternativeName>
</protein>
<feature type="chain" id="PRO_0000134899" description="Molybdenum cofactor guanylyltransferase">
    <location>
        <begin position="1"/>
        <end position="198"/>
    </location>
</feature>
<feature type="binding site" evidence="1">
    <location>
        <begin position="14"/>
        <end position="16"/>
    </location>
    <ligand>
        <name>GTP</name>
        <dbReference type="ChEBI" id="CHEBI:37565"/>
    </ligand>
</feature>
<feature type="binding site" evidence="1">
    <location>
        <position position="27"/>
    </location>
    <ligand>
        <name>GTP</name>
        <dbReference type="ChEBI" id="CHEBI:37565"/>
    </ligand>
</feature>
<feature type="binding site" evidence="1">
    <location>
        <position position="73"/>
    </location>
    <ligand>
        <name>GTP</name>
        <dbReference type="ChEBI" id="CHEBI:37565"/>
    </ligand>
</feature>
<feature type="binding site" evidence="1">
    <location>
        <position position="103"/>
    </location>
    <ligand>
        <name>GTP</name>
        <dbReference type="ChEBI" id="CHEBI:37565"/>
    </ligand>
</feature>
<feature type="binding site" evidence="1">
    <location>
        <position position="103"/>
    </location>
    <ligand>
        <name>Mg(2+)</name>
        <dbReference type="ChEBI" id="CHEBI:18420"/>
    </ligand>
</feature>
<proteinExistence type="inferred from homology"/>
<gene>
    <name evidence="1" type="primary">mobA</name>
    <name type="ordered locus">PA3030</name>
</gene>
<accession>O68799</accession>
<sequence>MPDSALPPCSILLLAGGRGQRMGGRDKGLIEWQGLPLIAHLHRLVRPLTDDLIVSCNRNQERYAAYADRVVSDDSRDFPGPLAGIRAGLAVARHPWLLVLPCDAPRIDRALLETLLQAAGRTPARPWMLRCGGQWEPLFSLIPTHLAEEIEHAWRQGDRSPRHVLLPLGAEAIELAAGDPRLANLNTPELLANHRELK</sequence>
<organism>
    <name type="scientific">Pseudomonas aeruginosa (strain ATCC 15692 / DSM 22644 / CIP 104116 / JCM 14847 / LMG 12228 / 1C / PRS 101 / PAO1)</name>
    <dbReference type="NCBI Taxonomy" id="208964"/>
    <lineage>
        <taxon>Bacteria</taxon>
        <taxon>Pseudomonadati</taxon>
        <taxon>Pseudomonadota</taxon>
        <taxon>Gammaproteobacteria</taxon>
        <taxon>Pseudomonadales</taxon>
        <taxon>Pseudomonadaceae</taxon>
        <taxon>Pseudomonas</taxon>
    </lineage>
</organism>
<keyword id="KW-0963">Cytoplasm</keyword>
<keyword id="KW-0342">GTP-binding</keyword>
<keyword id="KW-0460">Magnesium</keyword>
<keyword id="KW-0479">Metal-binding</keyword>
<keyword id="KW-0501">Molybdenum cofactor biosynthesis</keyword>
<keyword id="KW-0547">Nucleotide-binding</keyword>
<keyword id="KW-1185">Reference proteome</keyword>
<keyword id="KW-0808">Transferase</keyword>
<evidence type="ECO:0000255" key="1">
    <source>
        <dbReference type="HAMAP-Rule" id="MF_00316"/>
    </source>
</evidence>